<organism>
    <name type="scientific">Rattus norvegicus</name>
    <name type="common">Rat</name>
    <dbReference type="NCBI Taxonomy" id="10116"/>
    <lineage>
        <taxon>Eukaryota</taxon>
        <taxon>Metazoa</taxon>
        <taxon>Chordata</taxon>
        <taxon>Craniata</taxon>
        <taxon>Vertebrata</taxon>
        <taxon>Euteleostomi</taxon>
        <taxon>Mammalia</taxon>
        <taxon>Eutheria</taxon>
        <taxon>Euarchontoglires</taxon>
        <taxon>Glires</taxon>
        <taxon>Rodentia</taxon>
        <taxon>Myomorpha</taxon>
        <taxon>Muroidea</taxon>
        <taxon>Muridae</taxon>
        <taxon>Murinae</taxon>
        <taxon>Rattus</taxon>
    </lineage>
</organism>
<proteinExistence type="evidence at protein level"/>
<reference key="1">
    <citation type="journal article" date="1994" name="J. Biol. Chem.">
        <title>ADP-ribosylation factor (ARF)-like 3, a new member of the ARF family of GTP-binding proteins cloned from human and rat tissues.</title>
        <authorList>
            <person name="Cavenagh M.A."/>
            <person name="Breiner M."/>
            <person name="Schurmann A."/>
            <person name="Rosenwald A.G."/>
            <person name="Terui T."/>
            <person name="Zhang C.-J."/>
            <person name="Randoazzo P.A."/>
            <person name="Adams M."/>
            <person name="Joost H.-G."/>
            <person name="Kahn R.A."/>
        </authorList>
    </citation>
    <scope>NUCLEOTIDE SEQUENCE [MRNA]</scope>
    <source>
        <strain>Sprague-Dawley</strain>
    </source>
</reference>
<reference key="2">
    <citation type="submission" date="1994-07" db="EMBL/GenBank/DDBJ databases">
        <authorList>
            <person name="Wong S."/>
        </authorList>
    </citation>
    <scope>NUCLEOTIDE SEQUENCE [MRNA]</scope>
    <source>
        <strain>Sprague-Dawley</strain>
        <tissue>Brain</tissue>
    </source>
</reference>
<reference key="3">
    <citation type="journal article" date="2004" name="Genome Res.">
        <title>The status, quality, and expansion of the NIH full-length cDNA project: the Mammalian Gene Collection (MGC).</title>
        <authorList>
            <consortium name="The MGC Project Team"/>
        </authorList>
    </citation>
    <scope>NUCLEOTIDE SEQUENCE [LARGE SCALE MRNA]</scope>
    <source>
        <tissue>Ovary</tissue>
    </source>
</reference>
<reference key="4">
    <citation type="submission" date="2007-07" db="UniProtKB">
        <authorList>
            <person name="Lubec G."/>
            <person name="Kang S.U."/>
        </authorList>
    </citation>
    <scope>PROTEIN SEQUENCE OF 20-30</scope>
    <scope>IDENTIFICATION BY MASS SPECTROMETRY</scope>
    <source>
        <strain>Sprague-Dawley</strain>
        <tissue>Brain</tissue>
    </source>
</reference>
<accession>P37996</accession>
<sequence length="182" mass="20457">MGLLSILRKLKSAPDQEVRILLLGLDNAGKTTLLKQLASEDISHITPTQGFNIKSVQSQGFKLNVWDIGGQRKIRPYWRSYFENTDILIYVIDSADRKRFEETGQELTELLEEEKLSCVPVLVFANKQDLLTAAPAAEIAEGLNLHTIRDRVWQIQSCSALTGEGVQDGMNWVCKNVNAKKK</sequence>
<name>ARL3_RAT</name>
<dbReference type="EMBL" id="X76921">
    <property type="protein sequence ID" value="CAA54246.1"/>
    <property type="molecule type" value="mRNA"/>
</dbReference>
<dbReference type="EMBL" id="U12568">
    <property type="protein sequence ID" value="AAA50861.1"/>
    <property type="molecule type" value="mRNA"/>
</dbReference>
<dbReference type="EMBL" id="BC084722">
    <property type="protein sequence ID" value="AAH84722.1"/>
    <property type="molecule type" value="mRNA"/>
</dbReference>
<dbReference type="PIR" id="B54869">
    <property type="entry name" value="B54869"/>
</dbReference>
<dbReference type="RefSeq" id="NP_073191.1">
    <property type="nucleotide sequence ID" value="NM_022700.2"/>
</dbReference>
<dbReference type="SMR" id="P37996"/>
<dbReference type="FunCoup" id="P37996">
    <property type="interactions" value="914"/>
</dbReference>
<dbReference type="STRING" id="10116.ENSRNOP00000027093"/>
<dbReference type="GlyGen" id="P37996">
    <property type="glycosylation" value="1 site"/>
</dbReference>
<dbReference type="iPTMnet" id="P37996"/>
<dbReference type="PhosphoSitePlus" id="P37996"/>
<dbReference type="jPOST" id="P37996"/>
<dbReference type="PaxDb" id="10116-ENSRNOP00000027093"/>
<dbReference type="Ensembl" id="ENSRNOT00000118411.1">
    <property type="protein sequence ID" value="ENSRNOP00000093371.1"/>
    <property type="gene ID" value="ENSRNOG00000019973.7"/>
</dbReference>
<dbReference type="GeneID" id="64664"/>
<dbReference type="KEGG" id="rno:64664"/>
<dbReference type="UCSC" id="RGD:69327">
    <property type="organism name" value="rat"/>
</dbReference>
<dbReference type="AGR" id="RGD:69327"/>
<dbReference type="CTD" id="403"/>
<dbReference type="RGD" id="69327">
    <property type="gene designation" value="Arl3"/>
</dbReference>
<dbReference type="eggNOG" id="KOG0074">
    <property type="taxonomic scope" value="Eukaryota"/>
</dbReference>
<dbReference type="GeneTree" id="ENSGT00940000155737"/>
<dbReference type="InParanoid" id="P37996"/>
<dbReference type="PhylomeDB" id="P37996"/>
<dbReference type="Reactome" id="R-RNO-5624138">
    <property type="pathway name" value="Trafficking of myristoylated proteins to the cilium"/>
</dbReference>
<dbReference type="PRO" id="PR:P37996"/>
<dbReference type="Proteomes" id="UP000002494">
    <property type="component" value="Chromosome 1"/>
</dbReference>
<dbReference type="GO" id="GO:0005930">
    <property type="term" value="C:axoneme"/>
    <property type="evidence" value="ECO:0000266"/>
    <property type="project" value="RGD"/>
</dbReference>
<dbReference type="GO" id="GO:0005813">
    <property type="term" value="C:centrosome"/>
    <property type="evidence" value="ECO:0000250"/>
    <property type="project" value="UniProtKB"/>
</dbReference>
<dbReference type="GO" id="GO:0036064">
    <property type="term" value="C:ciliary basal body"/>
    <property type="evidence" value="ECO:0000266"/>
    <property type="project" value="RGD"/>
</dbReference>
<dbReference type="GO" id="GO:0035869">
    <property type="term" value="C:ciliary transition zone"/>
    <property type="evidence" value="ECO:0000266"/>
    <property type="project" value="RGD"/>
</dbReference>
<dbReference type="GO" id="GO:0005929">
    <property type="term" value="C:cilium"/>
    <property type="evidence" value="ECO:0000250"/>
    <property type="project" value="UniProtKB"/>
</dbReference>
<dbReference type="GO" id="GO:0005737">
    <property type="term" value="C:cytoplasm"/>
    <property type="evidence" value="ECO:0000318"/>
    <property type="project" value="GO_Central"/>
</dbReference>
<dbReference type="GO" id="GO:0005881">
    <property type="term" value="C:cytoplasmic microtubule"/>
    <property type="evidence" value="ECO:0000250"/>
    <property type="project" value="UniProtKB"/>
</dbReference>
<dbReference type="GO" id="GO:0005794">
    <property type="term" value="C:Golgi apparatus"/>
    <property type="evidence" value="ECO:0000250"/>
    <property type="project" value="UniProtKB"/>
</dbReference>
<dbReference type="GO" id="GO:0000139">
    <property type="term" value="C:Golgi membrane"/>
    <property type="evidence" value="ECO:0007669"/>
    <property type="project" value="UniProtKB-SubCell"/>
</dbReference>
<dbReference type="GO" id="GO:0015630">
    <property type="term" value="C:microtubule cytoskeleton"/>
    <property type="evidence" value="ECO:0000318"/>
    <property type="project" value="GO_Central"/>
</dbReference>
<dbReference type="GO" id="GO:0030496">
    <property type="term" value="C:midbody"/>
    <property type="evidence" value="ECO:0000250"/>
    <property type="project" value="UniProtKB"/>
</dbReference>
<dbReference type="GO" id="GO:0005634">
    <property type="term" value="C:nucleus"/>
    <property type="evidence" value="ECO:0000250"/>
    <property type="project" value="UniProtKB"/>
</dbReference>
<dbReference type="GO" id="GO:0032391">
    <property type="term" value="C:photoreceptor connecting cilium"/>
    <property type="evidence" value="ECO:0000250"/>
    <property type="project" value="UniProtKB"/>
</dbReference>
<dbReference type="GO" id="GO:0005876">
    <property type="term" value="C:spindle microtubule"/>
    <property type="evidence" value="ECO:0000250"/>
    <property type="project" value="UniProtKB"/>
</dbReference>
<dbReference type="GO" id="GO:0019003">
    <property type="term" value="F:GDP binding"/>
    <property type="evidence" value="ECO:0000314"/>
    <property type="project" value="RGD"/>
</dbReference>
<dbReference type="GO" id="GO:0005525">
    <property type="term" value="F:GTP binding"/>
    <property type="evidence" value="ECO:0000314"/>
    <property type="project" value="RGD"/>
</dbReference>
<dbReference type="GO" id="GO:0003924">
    <property type="term" value="F:GTPase activity"/>
    <property type="evidence" value="ECO:0000266"/>
    <property type="project" value="RGD"/>
</dbReference>
<dbReference type="GO" id="GO:0000287">
    <property type="term" value="F:magnesium ion binding"/>
    <property type="evidence" value="ECO:0000266"/>
    <property type="project" value="RGD"/>
</dbReference>
<dbReference type="GO" id="GO:0008017">
    <property type="term" value="F:microtubule binding"/>
    <property type="evidence" value="ECO:0000250"/>
    <property type="project" value="UniProtKB"/>
</dbReference>
<dbReference type="GO" id="GO:0060271">
    <property type="term" value="P:cilium assembly"/>
    <property type="evidence" value="ECO:0000250"/>
    <property type="project" value="UniProtKB"/>
</dbReference>
<dbReference type="GO" id="GO:0006893">
    <property type="term" value="P:Golgi to plasma membrane transport"/>
    <property type="evidence" value="ECO:0000250"/>
    <property type="project" value="UniProtKB"/>
</dbReference>
<dbReference type="GO" id="GO:0042073">
    <property type="term" value="P:intraciliary transport"/>
    <property type="evidence" value="ECO:0000266"/>
    <property type="project" value="RGD"/>
</dbReference>
<dbReference type="GO" id="GO:0001822">
    <property type="term" value="P:kidney development"/>
    <property type="evidence" value="ECO:0000250"/>
    <property type="project" value="UniProtKB"/>
</dbReference>
<dbReference type="GO" id="GO:0000281">
    <property type="term" value="P:mitotic cytokinesis"/>
    <property type="evidence" value="ECO:0000250"/>
    <property type="project" value="UniProtKB"/>
</dbReference>
<dbReference type="GO" id="GO:0042461">
    <property type="term" value="P:photoreceptor cell development"/>
    <property type="evidence" value="ECO:0000250"/>
    <property type="project" value="UniProtKB"/>
</dbReference>
<dbReference type="GO" id="GO:0006892">
    <property type="term" value="P:post-Golgi vesicle-mediated transport"/>
    <property type="evidence" value="ECO:0000266"/>
    <property type="project" value="RGD"/>
</dbReference>
<dbReference type="GO" id="GO:1903441">
    <property type="term" value="P:protein localization to ciliary membrane"/>
    <property type="evidence" value="ECO:0000250"/>
    <property type="project" value="UniProtKB"/>
</dbReference>
<dbReference type="GO" id="GO:0061512">
    <property type="term" value="P:protein localization to cilium"/>
    <property type="evidence" value="ECO:0000266"/>
    <property type="project" value="RGD"/>
</dbReference>
<dbReference type="GO" id="GO:0015031">
    <property type="term" value="P:protein transport"/>
    <property type="evidence" value="ECO:0007669"/>
    <property type="project" value="UniProtKB-KW"/>
</dbReference>
<dbReference type="GO" id="GO:0007264">
    <property type="term" value="P:small GTPase-mediated signal transduction"/>
    <property type="evidence" value="ECO:0000250"/>
    <property type="project" value="UniProtKB"/>
</dbReference>
<dbReference type="GO" id="GO:0007224">
    <property type="term" value="P:smoothened signaling pathway"/>
    <property type="evidence" value="ECO:0000266"/>
    <property type="project" value="RGD"/>
</dbReference>
<dbReference type="CDD" id="cd04155">
    <property type="entry name" value="Arl3"/>
    <property type="match status" value="1"/>
</dbReference>
<dbReference type="FunFam" id="3.40.50.300:FF:000281">
    <property type="entry name" value="ADP-ribosylation factor-like protein 3"/>
    <property type="match status" value="1"/>
</dbReference>
<dbReference type="Gene3D" id="3.40.50.300">
    <property type="entry name" value="P-loop containing nucleotide triphosphate hydrolases"/>
    <property type="match status" value="1"/>
</dbReference>
<dbReference type="InterPro" id="IPR044612">
    <property type="entry name" value="ARL2/3"/>
</dbReference>
<dbReference type="InterPro" id="IPR027417">
    <property type="entry name" value="P-loop_NTPase"/>
</dbReference>
<dbReference type="InterPro" id="IPR005225">
    <property type="entry name" value="Small_GTP-bd"/>
</dbReference>
<dbReference type="InterPro" id="IPR006689">
    <property type="entry name" value="Small_GTPase_ARF/SAR"/>
</dbReference>
<dbReference type="NCBIfam" id="TIGR00231">
    <property type="entry name" value="small_GTP"/>
    <property type="match status" value="1"/>
</dbReference>
<dbReference type="PANTHER" id="PTHR45697">
    <property type="entry name" value="ADP-RIBOSYLATION FACTOR-LIKE PROTEIN 2-RELATED"/>
    <property type="match status" value="1"/>
</dbReference>
<dbReference type="Pfam" id="PF00025">
    <property type="entry name" value="Arf"/>
    <property type="match status" value="1"/>
</dbReference>
<dbReference type="PRINTS" id="PR00328">
    <property type="entry name" value="SAR1GTPBP"/>
</dbReference>
<dbReference type="SMART" id="SM00177">
    <property type="entry name" value="ARF"/>
    <property type="match status" value="1"/>
</dbReference>
<dbReference type="SMART" id="SM00175">
    <property type="entry name" value="RAB"/>
    <property type="match status" value="1"/>
</dbReference>
<dbReference type="SMART" id="SM00178">
    <property type="entry name" value="SAR"/>
    <property type="match status" value="1"/>
</dbReference>
<dbReference type="SUPFAM" id="SSF52540">
    <property type="entry name" value="P-loop containing nucleoside triphosphate hydrolases"/>
    <property type="match status" value="1"/>
</dbReference>
<dbReference type="PROSITE" id="PS51417">
    <property type="entry name" value="ARF"/>
    <property type="match status" value="1"/>
</dbReference>
<comment type="function">
    <text evidence="2 3">Small GTP-binding protein which cycles between an inactive GDP-bound and an active GTP-bound form, and the rate of cycling is regulated by guanine nucleotide exchange factors (GEF) and GTPase-activating proteins (GAP). Required for normal cytokinesis and cilia signaling. Requires assistance from GTPase-activating proteins (GAPs) like RP2 and PDE6D, in order to cycle between inactive GDP-bound and active GTP-bound forms. Required for targeting proteins to the cilium, including myristoylated NPHP3 and prenylated INPP5E. Targets NPHP3 to the ciliary membrane by releasing myristoylated NPHP3 from UNC119B cargo adapter into the cilium (By similarity). Required for PKD1:PKD2 complex targeting from the trans-Golgi network to the cilium (By similarity).</text>
</comment>
<comment type="subunit">
    <text evidence="2 3">Found in a complex with ARL3, RP2 and UNC119 (or UNC119B); RP2 induces hydrolysis of GTP ARL3 in the complex, leading to the release of UNC119 (or UNC119B). Interacts with RP2; interaction is direct and stimulated with the activated GTP-bound form of ARL3. Interacts with SYS1. Interacts with ARL2BP; the GTP-bound form interacts with ARL2BP. Microtubule-associated protein. Does not interact with TBCC (By similarity). Interacts with RP2. Interacts with PDE6D; the interaction occurs specifically with the GTP-bound form of ARL3. Interacts with GGA1; the interaction recruits PKD1:PKD2 complex to trans-Golgi network and is required for ciliary targeting of PKD1:PKD2 complex (By similarity). Interacts with DNAAF9 (By similarity).</text>
</comment>
<comment type="subcellular location">
    <subcellularLocation>
        <location evidence="1">Golgi apparatus membrane</location>
        <topology evidence="1">Peripheral membrane protein</topology>
        <orientation evidence="1">Cytoplasmic side</orientation>
    </subcellularLocation>
    <subcellularLocation>
        <location evidence="1">Cytoplasm</location>
        <location evidence="1">Cytoskeleton</location>
        <location evidence="1">Spindle</location>
    </subcellularLocation>
    <subcellularLocation>
        <location evidence="1">Nucleus</location>
    </subcellularLocation>
    <subcellularLocation>
        <location evidence="1">Cytoplasm</location>
        <location evidence="1">Cytoskeleton</location>
        <location evidence="1">Microtubule organizing center</location>
        <location evidence="1">Centrosome</location>
    </subcellularLocation>
    <subcellularLocation>
        <location evidence="1">Cytoplasm</location>
    </subcellularLocation>
    <subcellularLocation>
        <location evidence="2">Cell projection</location>
        <location evidence="2">Cilium</location>
    </subcellularLocation>
    <text evidence="1">Detected predominantly in the photoreceptor connecting cilium. Centrosome-associated throughout the cell cycle. Not detected to interphase microtubules. Present on the mitotic spindle (By similarity).</text>
</comment>
<comment type="similarity">
    <text evidence="5">Belongs to the small GTPase superfamily. Arf family.</text>
</comment>
<gene>
    <name type="primary">Arl3</name>
</gene>
<keyword id="KW-0131">Cell cycle</keyword>
<keyword id="KW-0132">Cell division</keyword>
<keyword id="KW-0966">Cell projection</keyword>
<keyword id="KW-0963">Cytoplasm</keyword>
<keyword id="KW-0206">Cytoskeleton</keyword>
<keyword id="KW-0903">Direct protein sequencing</keyword>
<keyword id="KW-0333">Golgi apparatus</keyword>
<keyword id="KW-0342">GTP-binding</keyword>
<keyword id="KW-0449">Lipoprotein</keyword>
<keyword id="KW-0460">Magnesium</keyword>
<keyword id="KW-0472">Membrane</keyword>
<keyword id="KW-0479">Metal-binding</keyword>
<keyword id="KW-0519">Myristate</keyword>
<keyword id="KW-0547">Nucleotide-binding</keyword>
<keyword id="KW-0539">Nucleus</keyword>
<keyword id="KW-0597">Phosphoprotein</keyword>
<keyword id="KW-0653">Protein transport</keyword>
<keyword id="KW-1185">Reference proteome</keyword>
<keyword id="KW-0813">Transport</keyword>
<feature type="initiator methionine" description="Removed" evidence="4">
    <location>
        <position position="1"/>
    </location>
</feature>
<feature type="chain" id="PRO_0000207458" description="ADP-ribosylation factor-like protein 3">
    <location>
        <begin position="2"/>
        <end position="182"/>
    </location>
</feature>
<feature type="binding site" evidence="1">
    <location>
        <begin position="24"/>
        <end position="31"/>
    </location>
    <ligand>
        <name>GTP</name>
        <dbReference type="ChEBI" id="CHEBI:37565"/>
    </ligand>
</feature>
<feature type="binding site" evidence="1">
    <location>
        <position position="31"/>
    </location>
    <ligand>
        <name>Mg(2+)</name>
        <dbReference type="ChEBI" id="CHEBI:18420"/>
    </ligand>
</feature>
<feature type="binding site" evidence="1">
    <location>
        <position position="48"/>
    </location>
    <ligand>
        <name>GTP</name>
        <dbReference type="ChEBI" id="CHEBI:37565"/>
    </ligand>
</feature>
<feature type="binding site" evidence="1">
    <location>
        <position position="48"/>
    </location>
    <ligand>
        <name>Mg(2+)</name>
        <dbReference type="ChEBI" id="CHEBI:18420"/>
    </ligand>
</feature>
<feature type="binding site" evidence="1">
    <location>
        <begin position="67"/>
        <end position="71"/>
    </location>
    <ligand>
        <name>GTP</name>
        <dbReference type="ChEBI" id="CHEBI:37565"/>
    </ligand>
</feature>
<feature type="binding site" evidence="1">
    <location>
        <position position="70"/>
    </location>
    <ligand>
        <name>GTP</name>
        <dbReference type="ChEBI" id="CHEBI:37565"/>
    </ligand>
</feature>
<feature type="binding site" evidence="1">
    <location>
        <begin position="126"/>
        <end position="129"/>
    </location>
    <ligand>
        <name>GTP</name>
        <dbReference type="ChEBI" id="CHEBI:37565"/>
    </ligand>
</feature>
<feature type="binding site" evidence="1">
    <location>
        <begin position="159"/>
        <end position="161"/>
    </location>
    <ligand>
        <name>GTP</name>
        <dbReference type="ChEBI" id="CHEBI:37565"/>
    </ligand>
</feature>
<feature type="modified residue" description="Phosphoserine" evidence="2">
    <location>
        <position position="5"/>
    </location>
</feature>
<feature type="lipid moiety-binding region" description="N-myristoyl glycine" evidence="4">
    <location>
        <position position="2"/>
    </location>
</feature>
<evidence type="ECO:0000250" key="1"/>
<evidence type="ECO:0000250" key="2">
    <source>
        <dbReference type="UniProtKB" id="P36405"/>
    </source>
</evidence>
<evidence type="ECO:0000250" key="3">
    <source>
        <dbReference type="UniProtKB" id="Q9WUL7"/>
    </source>
</evidence>
<evidence type="ECO:0000255" key="4"/>
<evidence type="ECO:0000305" key="5"/>
<protein>
    <recommendedName>
        <fullName>ADP-ribosylation factor-like protein 3</fullName>
    </recommendedName>
    <alternativeName>
        <fullName>ARD3</fullName>
    </alternativeName>
</protein>